<gene>
    <name evidence="1" type="primary">cysS</name>
    <name type="ordered locus">Ddes_1447</name>
</gene>
<reference key="1">
    <citation type="submission" date="2009-01" db="EMBL/GenBank/DDBJ databases">
        <title>Complete sequence of Desulfovibrio desulfuricans subsp. desulfuricans str. ATCC 27774.</title>
        <authorList>
            <consortium name="US DOE Joint Genome Institute"/>
            <person name="Lucas S."/>
            <person name="Copeland A."/>
            <person name="Lapidus A."/>
            <person name="Glavina del Rio T."/>
            <person name="Tice H."/>
            <person name="Bruce D."/>
            <person name="Goodwin L."/>
            <person name="Pitluck S."/>
            <person name="Sims D."/>
            <person name="Lu M."/>
            <person name="Kiss H."/>
            <person name="Meineke L."/>
            <person name="Brettin T."/>
            <person name="Detter J.C."/>
            <person name="Han C."/>
            <person name="Larimer F."/>
            <person name="Land M."/>
            <person name="Hauser L."/>
            <person name="Kyrpides N."/>
            <person name="Ovchinnikova G."/>
            <person name="Hazen T.C."/>
        </authorList>
    </citation>
    <scope>NUCLEOTIDE SEQUENCE [LARGE SCALE GENOMIC DNA]</scope>
    <source>
        <strain>ATCC 27774 / DSM 6949 / MB</strain>
    </source>
</reference>
<feature type="chain" id="PRO_1000199057" description="Cysteine--tRNA ligase">
    <location>
        <begin position="1"/>
        <end position="483"/>
    </location>
</feature>
<feature type="short sequence motif" description="'HIGH' region">
    <location>
        <begin position="29"/>
        <end position="39"/>
    </location>
</feature>
<feature type="short sequence motif" description="'KMSKS' region">
    <location>
        <begin position="263"/>
        <end position="267"/>
    </location>
</feature>
<feature type="binding site" evidence="1">
    <location>
        <position position="27"/>
    </location>
    <ligand>
        <name>Zn(2+)</name>
        <dbReference type="ChEBI" id="CHEBI:29105"/>
    </ligand>
</feature>
<feature type="binding site" evidence="1">
    <location>
        <position position="208"/>
    </location>
    <ligand>
        <name>Zn(2+)</name>
        <dbReference type="ChEBI" id="CHEBI:29105"/>
    </ligand>
</feature>
<feature type="binding site" evidence="1">
    <location>
        <position position="231"/>
    </location>
    <ligand>
        <name>Zn(2+)</name>
        <dbReference type="ChEBI" id="CHEBI:29105"/>
    </ligand>
</feature>
<feature type="binding site" evidence="1">
    <location>
        <position position="235"/>
    </location>
    <ligand>
        <name>Zn(2+)</name>
        <dbReference type="ChEBI" id="CHEBI:29105"/>
    </ligand>
</feature>
<feature type="binding site" evidence="1">
    <location>
        <position position="266"/>
    </location>
    <ligand>
        <name>ATP</name>
        <dbReference type="ChEBI" id="CHEBI:30616"/>
    </ligand>
</feature>
<accession>B8J0S2</accession>
<protein>
    <recommendedName>
        <fullName evidence="1">Cysteine--tRNA ligase</fullName>
        <ecNumber evidence="1">6.1.1.16</ecNumber>
    </recommendedName>
    <alternativeName>
        <fullName evidence="1">Cysteinyl-tRNA synthetase</fullName>
        <shortName evidence="1">CysRS</shortName>
    </alternativeName>
</protein>
<dbReference type="EC" id="6.1.1.16" evidence="1"/>
<dbReference type="EMBL" id="CP001358">
    <property type="protein sequence ID" value="ACL49349.1"/>
    <property type="molecule type" value="Genomic_DNA"/>
</dbReference>
<dbReference type="SMR" id="B8J0S2"/>
<dbReference type="STRING" id="525146.Ddes_1447"/>
<dbReference type="KEGG" id="dds:Ddes_1447"/>
<dbReference type="eggNOG" id="COG0215">
    <property type="taxonomic scope" value="Bacteria"/>
</dbReference>
<dbReference type="HOGENOM" id="CLU_013528_0_1_7"/>
<dbReference type="GO" id="GO:0005737">
    <property type="term" value="C:cytoplasm"/>
    <property type="evidence" value="ECO:0007669"/>
    <property type="project" value="UniProtKB-SubCell"/>
</dbReference>
<dbReference type="GO" id="GO:0005524">
    <property type="term" value="F:ATP binding"/>
    <property type="evidence" value="ECO:0007669"/>
    <property type="project" value="UniProtKB-UniRule"/>
</dbReference>
<dbReference type="GO" id="GO:0004817">
    <property type="term" value="F:cysteine-tRNA ligase activity"/>
    <property type="evidence" value="ECO:0007669"/>
    <property type="project" value="UniProtKB-UniRule"/>
</dbReference>
<dbReference type="GO" id="GO:0008270">
    <property type="term" value="F:zinc ion binding"/>
    <property type="evidence" value="ECO:0007669"/>
    <property type="project" value="UniProtKB-UniRule"/>
</dbReference>
<dbReference type="GO" id="GO:0006423">
    <property type="term" value="P:cysteinyl-tRNA aminoacylation"/>
    <property type="evidence" value="ECO:0007669"/>
    <property type="project" value="UniProtKB-UniRule"/>
</dbReference>
<dbReference type="CDD" id="cd00672">
    <property type="entry name" value="CysRS_core"/>
    <property type="match status" value="1"/>
</dbReference>
<dbReference type="FunFam" id="3.40.50.620:FF:000009">
    <property type="entry name" value="Cysteine--tRNA ligase"/>
    <property type="match status" value="1"/>
</dbReference>
<dbReference type="Gene3D" id="1.20.120.1910">
    <property type="entry name" value="Cysteine-tRNA ligase, C-terminal anti-codon recognition domain"/>
    <property type="match status" value="1"/>
</dbReference>
<dbReference type="Gene3D" id="3.40.50.620">
    <property type="entry name" value="HUPs"/>
    <property type="match status" value="1"/>
</dbReference>
<dbReference type="HAMAP" id="MF_00041">
    <property type="entry name" value="Cys_tRNA_synth"/>
    <property type="match status" value="1"/>
</dbReference>
<dbReference type="InterPro" id="IPR015803">
    <property type="entry name" value="Cys-tRNA-ligase"/>
</dbReference>
<dbReference type="InterPro" id="IPR015273">
    <property type="entry name" value="Cys-tRNA-synt_Ia_DALR"/>
</dbReference>
<dbReference type="InterPro" id="IPR024909">
    <property type="entry name" value="Cys-tRNA/MSH_ligase"/>
</dbReference>
<dbReference type="InterPro" id="IPR056411">
    <property type="entry name" value="CysS_C"/>
</dbReference>
<dbReference type="InterPro" id="IPR014729">
    <property type="entry name" value="Rossmann-like_a/b/a_fold"/>
</dbReference>
<dbReference type="InterPro" id="IPR032678">
    <property type="entry name" value="tRNA-synt_1_cat_dom"/>
</dbReference>
<dbReference type="InterPro" id="IPR009080">
    <property type="entry name" value="tRNAsynth_Ia_anticodon-bd"/>
</dbReference>
<dbReference type="NCBIfam" id="TIGR00435">
    <property type="entry name" value="cysS"/>
    <property type="match status" value="1"/>
</dbReference>
<dbReference type="PANTHER" id="PTHR10890">
    <property type="entry name" value="CYSTEINYL-TRNA SYNTHETASE"/>
    <property type="match status" value="1"/>
</dbReference>
<dbReference type="Pfam" id="PF23493">
    <property type="entry name" value="CysS_C"/>
    <property type="match status" value="1"/>
</dbReference>
<dbReference type="Pfam" id="PF09190">
    <property type="entry name" value="DALR_2"/>
    <property type="match status" value="1"/>
</dbReference>
<dbReference type="Pfam" id="PF01406">
    <property type="entry name" value="tRNA-synt_1e"/>
    <property type="match status" value="1"/>
</dbReference>
<dbReference type="PRINTS" id="PR00983">
    <property type="entry name" value="TRNASYNTHCYS"/>
</dbReference>
<dbReference type="SMART" id="SM00840">
    <property type="entry name" value="DALR_2"/>
    <property type="match status" value="1"/>
</dbReference>
<dbReference type="SUPFAM" id="SSF47323">
    <property type="entry name" value="Anticodon-binding domain of a subclass of class I aminoacyl-tRNA synthetases"/>
    <property type="match status" value="1"/>
</dbReference>
<dbReference type="SUPFAM" id="SSF52374">
    <property type="entry name" value="Nucleotidylyl transferase"/>
    <property type="match status" value="1"/>
</dbReference>
<proteinExistence type="inferred from homology"/>
<comment type="catalytic activity">
    <reaction evidence="1">
        <text>tRNA(Cys) + L-cysteine + ATP = L-cysteinyl-tRNA(Cys) + AMP + diphosphate</text>
        <dbReference type="Rhea" id="RHEA:17773"/>
        <dbReference type="Rhea" id="RHEA-COMP:9661"/>
        <dbReference type="Rhea" id="RHEA-COMP:9679"/>
        <dbReference type="ChEBI" id="CHEBI:30616"/>
        <dbReference type="ChEBI" id="CHEBI:33019"/>
        <dbReference type="ChEBI" id="CHEBI:35235"/>
        <dbReference type="ChEBI" id="CHEBI:78442"/>
        <dbReference type="ChEBI" id="CHEBI:78517"/>
        <dbReference type="ChEBI" id="CHEBI:456215"/>
        <dbReference type="EC" id="6.1.1.16"/>
    </reaction>
</comment>
<comment type="cofactor">
    <cofactor evidence="1">
        <name>Zn(2+)</name>
        <dbReference type="ChEBI" id="CHEBI:29105"/>
    </cofactor>
    <text evidence="1">Binds 1 zinc ion per subunit.</text>
</comment>
<comment type="subunit">
    <text evidence="1">Monomer.</text>
</comment>
<comment type="subcellular location">
    <subcellularLocation>
        <location evidence="1">Cytoplasm</location>
    </subcellularLocation>
</comment>
<comment type="similarity">
    <text evidence="1">Belongs to the class-I aminoacyl-tRNA synthetase family.</text>
</comment>
<evidence type="ECO:0000255" key="1">
    <source>
        <dbReference type="HAMAP-Rule" id="MF_00041"/>
    </source>
</evidence>
<keyword id="KW-0030">Aminoacyl-tRNA synthetase</keyword>
<keyword id="KW-0067">ATP-binding</keyword>
<keyword id="KW-0963">Cytoplasm</keyword>
<keyword id="KW-0436">Ligase</keyword>
<keyword id="KW-0479">Metal-binding</keyword>
<keyword id="KW-0547">Nucleotide-binding</keyword>
<keyword id="KW-0648">Protein biosynthesis</keyword>
<keyword id="KW-0862">Zinc</keyword>
<sequence length="483" mass="54987">MLLYNTLGRQKEEFTPLRPGKVHMYVCGITAYDYCHIGHARSALVFDVLVRQLRHMGLDVTFVRNFTDVDDKIINRANKEGLDWREVAQTYINAFYEDMDRLGVQRADVEPRATDHIQEIQDLCAKLVAEGKAYATTSGDVYFRVRSYPPYGKLSGRSLDELLSGARVAPGEEKEDPLDFALWKAAKPGEPSWESPWGPGRPGWHIECSAMSESYLPLDIHGGGQDLVFPHHENEIAQTEAVCHCHLARYWVHNGFVQVNAEKMSKSLGNFKTIRDILESYLPETLRFFLLGKHYRSPIDFTAEGMDEAEKALHRVYTALLETQKALTREKWKKSPLPAQLTEDWAAQAEALDEAMNDDLNTAQALGHIFTQVRLVNRLLEDKTLRAAEAGRDLLQDFLARAEQWNTRLGLFGQQPEAFLADLRRIRAARRNIDIPRVEALLQERQEARANKDFARSDALRQALLDLGVSVQDTPEGQNWDLE</sequence>
<organism>
    <name type="scientific">Desulfovibrio desulfuricans (strain ATCC 27774 / DSM 6949 / MB)</name>
    <dbReference type="NCBI Taxonomy" id="525146"/>
    <lineage>
        <taxon>Bacteria</taxon>
        <taxon>Pseudomonadati</taxon>
        <taxon>Thermodesulfobacteriota</taxon>
        <taxon>Desulfovibrionia</taxon>
        <taxon>Desulfovibrionales</taxon>
        <taxon>Desulfovibrionaceae</taxon>
        <taxon>Desulfovibrio</taxon>
    </lineage>
</organism>
<name>SYC_DESDA</name>